<accession>A0A5B8YXH5</accession>
<evidence type="ECO:0000269" key="1">
    <source>
    </source>
</evidence>
<evidence type="ECO:0000269" key="2">
    <source>
    </source>
</evidence>
<evidence type="ECO:0000303" key="3">
    <source>
    </source>
</evidence>
<evidence type="ECO:0000305" key="4"/>
<evidence type="ECO:0000305" key="5">
    <source>
    </source>
</evidence>
<comment type="function">
    <text evidence="1 5">Baeyer-Villiger oxidase; part of the gene cluster that mediates the biosynthesis of dibenzodioxocinones such as pestalotiollide B, a novel class of inhibitors against cholesterol ester transfer protein (CEPT) (PubMed:31474098). The biosynthesis initiates from condensation of acetate and malonate units catalyzed by the non-reducing PKS pks8/GME11356. Pks8/GME11356 lacks a thioesterase (TE) domain, which is important to the cyclizing of the third ring of atrochrysone carboxylic acid, and the esterase GME11355 might play the role of TE and catalyzes the cyclization reaction of the C ring. The lactamase-like protein GME11357 (or other beta-lactamases in Pestalotiopsis microspora) probably hydrolyzes the thioester bond between the ACP of pks8/GME11356 and the intermediate to release atrochrysone carboxylic acid, which is spontaneously dehydrates to form endocrocin anthrone. Endocrocin anthrone is further converted to emodin via the endocrocin intermediate. Emodin is then oxidized by several enzymes such as the Baeyer-Villiger oxidase GME11358, the oxidoreductase GME11367, the short chain dehydrogenase/reductase GME11373, as well as by other oxidoreductases from the cluster, to modify the A and C rings and open the B ring, and finally yield monodictyphenone. The prenyltransferase GME11375 may catalyze the addition reaction between the C5 side chains and the carbon bone of dibenzodioxocinones. The remaining biochemical reactions to the final product dibenzodioxocinones should be methylation catalyzed by methyltransferase GME11366 and reduction and lactonization reaction catalyzed by a series of oxidordeuctases (Probable).</text>
</comment>
<comment type="pathway">
    <text evidence="5">Secondary metabolite biosynthesis.</text>
</comment>
<comment type="induction">
    <text evidence="2">The expression of the dibenzodioxocinones biosynthesis cluster is positively regulated by the transcription factor dibT.</text>
</comment>
<comment type="similarity">
    <text evidence="4">Belongs to the questin oxidase family.</text>
</comment>
<reference key="1">
    <citation type="journal article" date="2019" name="J. Microbiol. Biotechnol.">
        <title>A gene cluster for the biosynthesis of dibenzodioxocinons in the endophyte Pestalotiopsis microspora, a taxol producer.</title>
        <authorList>
            <person name="Liu Y."/>
            <person name="Chen L."/>
            <person name="Xie Q."/>
            <person name="Yu X."/>
            <person name="Duan A."/>
            <person name="Lin Y."/>
            <person name="Xiang B."/>
            <person name="Hao X."/>
            <person name="Chen W."/>
            <person name="Zhu X."/>
        </authorList>
    </citation>
    <scope>NUCLEOTIDE SEQUENCE [MRNA]</scope>
    <scope>FUNCTION</scope>
    <scope>PATHWAY</scope>
    <source>
        <strain>NK17</strain>
    </source>
</reference>
<reference key="2">
    <citation type="journal article" date="2022" name="Microbiol. Res.">
        <title>Acquiring novel chemicals by overexpression of a transcription factor DibT in the dibenzodioxocinone biosynthetic cluster in Pestalotiopsis microspora.</title>
        <authorList>
            <person name="Liu Y."/>
            <person name="Fu Y."/>
            <person name="Zhou M."/>
            <person name="Hao X."/>
            <person name="Zhang P."/>
            <person name="Zhu X."/>
        </authorList>
    </citation>
    <scope>INDUCTION</scope>
</reference>
<proteinExistence type="evidence at transcript level"/>
<gene>
    <name evidence="3" type="ORF">GME11358</name>
</gene>
<feature type="chain" id="PRO_0000456740" description="Baeyer-Villiger oxidase GME11358">
    <location>
        <begin position="1"/>
        <end position="449"/>
    </location>
</feature>
<dbReference type="EC" id="1.-.-.-" evidence="5"/>
<dbReference type="EMBL" id="MK590977">
    <property type="protein sequence ID" value="QED41489.1"/>
    <property type="molecule type" value="mRNA"/>
</dbReference>
<dbReference type="SMR" id="A0A5B8YXH5"/>
<dbReference type="GO" id="GO:0016491">
    <property type="term" value="F:oxidoreductase activity"/>
    <property type="evidence" value="ECO:0007669"/>
    <property type="project" value="UniProtKB-KW"/>
</dbReference>
<dbReference type="InterPro" id="IPR025337">
    <property type="entry name" value="Questin_oxidase-like"/>
</dbReference>
<dbReference type="PANTHER" id="PTHR35870:SF7">
    <property type="entry name" value="BAEYER-VILLIGER OXIDASE MDPL"/>
    <property type="match status" value="1"/>
</dbReference>
<dbReference type="PANTHER" id="PTHR35870">
    <property type="entry name" value="PROTEIN, PUTATIVE (AFU_ORTHOLOGUE AFUA_5G03330)-RELATED"/>
    <property type="match status" value="1"/>
</dbReference>
<dbReference type="Pfam" id="PF14027">
    <property type="entry name" value="Questin_oxidase"/>
    <property type="match status" value="1"/>
</dbReference>
<name>GME58_PESMI</name>
<protein>
    <recommendedName>
        <fullName evidence="3">Baeyer-Villiger oxidase GME11358</fullName>
        <ecNumber evidence="5">1.-.-.-</ecNumber>
    </recommendedName>
    <alternativeName>
        <fullName evidence="3">Dibenzodioxocinones biosynthesis cluster protein GME11358</fullName>
    </alternativeName>
</protein>
<organism>
    <name type="scientific">Pestalotiopsis microspora</name>
    <dbReference type="NCBI Taxonomy" id="85828"/>
    <lineage>
        <taxon>Eukaryota</taxon>
        <taxon>Fungi</taxon>
        <taxon>Dikarya</taxon>
        <taxon>Ascomycota</taxon>
        <taxon>Pezizomycotina</taxon>
        <taxon>Sordariomycetes</taxon>
        <taxon>Xylariomycetidae</taxon>
        <taxon>Amphisphaeriales</taxon>
        <taxon>Sporocadaceae</taxon>
        <taxon>Pestalotiopsis</taxon>
    </lineage>
</organism>
<keyword id="KW-0560">Oxidoreductase</keyword>
<sequence>MTAASQISMSARHLGYTRGGPDVPVESLKITNELLQKNHDELHIFFRDMNGHNHLVHNLFTRLALGATPEQLRTAFNDDLPTQRGIPSLDQDVVDKMHDDDFFSERITKINHYNNFMVFFEKEIASKGWQTVVNQYIFSKSRVAEALLPLMYDGAYHPIIHLGLGVEFEQPAVIAEALAQAAAHDSFDTDWFFQSAEQGALESQSGASPSSSESTLLELARETAQDNTIRDAARTPGLIGTMKMKKAIYPKAGKQLLSLASRFRVTKETLKQKTAEMVNFCAYLAGCAQRRDRATKVDFFFMHCVTSSLCLSVLAQQPWIDIADRVRLIEWKGRLDLAWYVTCGVPDLDLDHVKTYQAGVERGWDDIFALVSDQHDDGHVAKFVRALKHGEDICQQFEDGDASKAFPIRGDMWQVIARMAYDSTLNLPPPAKWVIMAGMDQAWVSVPEK</sequence>